<keyword id="KW-0021">Allosteric enzyme</keyword>
<keyword id="KW-0328">Glycosyltransferase</keyword>
<keyword id="KW-0342">GTP-binding</keyword>
<keyword id="KW-0460">Magnesium</keyword>
<keyword id="KW-0547">Nucleotide-binding</keyword>
<keyword id="KW-0808">Transferase</keyword>
<gene>
    <name evidence="1" type="primary">upp</name>
    <name type="ordered locus">YpsIP31758_1235</name>
</gene>
<proteinExistence type="inferred from homology"/>
<evidence type="ECO:0000255" key="1">
    <source>
        <dbReference type="HAMAP-Rule" id="MF_01218"/>
    </source>
</evidence>
<dbReference type="EC" id="2.4.2.9" evidence="1"/>
<dbReference type="EMBL" id="CP000720">
    <property type="protein sequence ID" value="ABS46938.1"/>
    <property type="molecule type" value="Genomic_DNA"/>
</dbReference>
<dbReference type="RefSeq" id="WP_002209776.1">
    <property type="nucleotide sequence ID" value="NC_009708.1"/>
</dbReference>
<dbReference type="SMR" id="A7FG38"/>
<dbReference type="GeneID" id="96666287"/>
<dbReference type="KEGG" id="ypi:YpsIP31758_1235"/>
<dbReference type="HOGENOM" id="CLU_067096_2_2_6"/>
<dbReference type="UniPathway" id="UPA00574">
    <property type="reaction ID" value="UER00636"/>
</dbReference>
<dbReference type="Proteomes" id="UP000002412">
    <property type="component" value="Chromosome"/>
</dbReference>
<dbReference type="GO" id="GO:0005525">
    <property type="term" value="F:GTP binding"/>
    <property type="evidence" value="ECO:0007669"/>
    <property type="project" value="UniProtKB-KW"/>
</dbReference>
<dbReference type="GO" id="GO:0000287">
    <property type="term" value="F:magnesium ion binding"/>
    <property type="evidence" value="ECO:0007669"/>
    <property type="project" value="UniProtKB-UniRule"/>
</dbReference>
<dbReference type="GO" id="GO:0004845">
    <property type="term" value="F:uracil phosphoribosyltransferase activity"/>
    <property type="evidence" value="ECO:0007669"/>
    <property type="project" value="UniProtKB-UniRule"/>
</dbReference>
<dbReference type="GO" id="GO:0044206">
    <property type="term" value="P:UMP salvage"/>
    <property type="evidence" value="ECO:0007669"/>
    <property type="project" value="UniProtKB-UniRule"/>
</dbReference>
<dbReference type="GO" id="GO:0006223">
    <property type="term" value="P:uracil salvage"/>
    <property type="evidence" value="ECO:0007669"/>
    <property type="project" value="InterPro"/>
</dbReference>
<dbReference type="CDD" id="cd06223">
    <property type="entry name" value="PRTases_typeI"/>
    <property type="match status" value="1"/>
</dbReference>
<dbReference type="FunFam" id="3.40.50.2020:FF:000003">
    <property type="entry name" value="Uracil phosphoribosyltransferase"/>
    <property type="match status" value="1"/>
</dbReference>
<dbReference type="Gene3D" id="3.40.50.2020">
    <property type="match status" value="1"/>
</dbReference>
<dbReference type="HAMAP" id="MF_01218_B">
    <property type="entry name" value="Upp_B"/>
    <property type="match status" value="1"/>
</dbReference>
<dbReference type="InterPro" id="IPR000836">
    <property type="entry name" value="PRibTrfase_dom"/>
</dbReference>
<dbReference type="InterPro" id="IPR029057">
    <property type="entry name" value="PRTase-like"/>
</dbReference>
<dbReference type="InterPro" id="IPR034332">
    <property type="entry name" value="Upp_B"/>
</dbReference>
<dbReference type="InterPro" id="IPR050054">
    <property type="entry name" value="UPRTase/APRTase"/>
</dbReference>
<dbReference type="InterPro" id="IPR005765">
    <property type="entry name" value="Ura_phspho_trans"/>
</dbReference>
<dbReference type="NCBIfam" id="NF001097">
    <property type="entry name" value="PRK00129.1"/>
    <property type="match status" value="1"/>
</dbReference>
<dbReference type="NCBIfam" id="TIGR01091">
    <property type="entry name" value="upp"/>
    <property type="match status" value="1"/>
</dbReference>
<dbReference type="PANTHER" id="PTHR32315">
    <property type="entry name" value="ADENINE PHOSPHORIBOSYLTRANSFERASE"/>
    <property type="match status" value="1"/>
</dbReference>
<dbReference type="PANTHER" id="PTHR32315:SF4">
    <property type="entry name" value="URACIL PHOSPHORIBOSYLTRANSFERASE, CHLOROPLASTIC"/>
    <property type="match status" value="1"/>
</dbReference>
<dbReference type="Pfam" id="PF14681">
    <property type="entry name" value="UPRTase"/>
    <property type="match status" value="1"/>
</dbReference>
<dbReference type="SUPFAM" id="SSF53271">
    <property type="entry name" value="PRTase-like"/>
    <property type="match status" value="1"/>
</dbReference>
<protein>
    <recommendedName>
        <fullName evidence="1">Uracil phosphoribosyltransferase</fullName>
        <ecNumber evidence="1">2.4.2.9</ecNumber>
    </recommendedName>
    <alternativeName>
        <fullName evidence="1">UMP pyrophosphorylase</fullName>
    </alternativeName>
    <alternativeName>
        <fullName evidence="1">UPRTase</fullName>
    </alternativeName>
</protein>
<organism>
    <name type="scientific">Yersinia pseudotuberculosis serotype O:1b (strain IP 31758)</name>
    <dbReference type="NCBI Taxonomy" id="349747"/>
    <lineage>
        <taxon>Bacteria</taxon>
        <taxon>Pseudomonadati</taxon>
        <taxon>Pseudomonadota</taxon>
        <taxon>Gammaproteobacteria</taxon>
        <taxon>Enterobacterales</taxon>
        <taxon>Yersiniaceae</taxon>
        <taxon>Yersinia</taxon>
    </lineage>
</organism>
<feature type="chain" id="PRO_1000066732" description="Uracil phosphoribosyltransferase">
    <location>
        <begin position="1"/>
        <end position="208"/>
    </location>
</feature>
<feature type="binding site" evidence="1">
    <location>
        <position position="78"/>
    </location>
    <ligand>
        <name>5-phospho-alpha-D-ribose 1-diphosphate</name>
        <dbReference type="ChEBI" id="CHEBI:58017"/>
    </ligand>
</feature>
<feature type="binding site" evidence="1">
    <location>
        <position position="103"/>
    </location>
    <ligand>
        <name>5-phospho-alpha-D-ribose 1-diphosphate</name>
        <dbReference type="ChEBI" id="CHEBI:58017"/>
    </ligand>
</feature>
<feature type="binding site" evidence="1">
    <location>
        <begin position="130"/>
        <end position="138"/>
    </location>
    <ligand>
        <name>5-phospho-alpha-D-ribose 1-diphosphate</name>
        <dbReference type="ChEBI" id="CHEBI:58017"/>
    </ligand>
</feature>
<feature type="binding site" evidence="1">
    <location>
        <position position="193"/>
    </location>
    <ligand>
        <name>uracil</name>
        <dbReference type="ChEBI" id="CHEBI:17568"/>
    </ligand>
</feature>
<feature type="binding site" evidence="1">
    <location>
        <begin position="198"/>
        <end position="200"/>
    </location>
    <ligand>
        <name>uracil</name>
        <dbReference type="ChEBI" id="CHEBI:17568"/>
    </ligand>
</feature>
<feature type="binding site" evidence="1">
    <location>
        <position position="199"/>
    </location>
    <ligand>
        <name>5-phospho-alpha-D-ribose 1-diphosphate</name>
        <dbReference type="ChEBI" id="CHEBI:58017"/>
    </ligand>
</feature>
<accession>A7FG38</accession>
<comment type="function">
    <text evidence="1">Catalyzes the conversion of uracil and 5-phospho-alpha-D-ribose 1-diphosphate (PRPP) to UMP and diphosphate.</text>
</comment>
<comment type="catalytic activity">
    <reaction evidence="1">
        <text>UMP + diphosphate = 5-phospho-alpha-D-ribose 1-diphosphate + uracil</text>
        <dbReference type="Rhea" id="RHEA:13017"/>
        <dbReference type="ChEBI" id="CHEBI:17568"/>
        <dbReference type="ChEBI" id="CHEBI:33019"/>
        <dbReference type="ChEBI" id="CHEBI:57865"/>
        <dbReference type="ChEBI" id="CHEBI:58017"/>
        <dbReference type="EC" id="2.4.2.9"/>
    </reaction>
</comment>
<comment type="cofactor">
    <cofactor evidence="1">
        <name>Mg(2+)</name>
        <dbReference type="ChEBI" id="CHEBI:18420"/>
    </cofactor>
    <text evidence="1">Binds 1 Mg(2+) ion per subunit. The magnesium is bound as Mg-PRPP.</text>
</comment>
<comment type="activity regulation">
    <text evidence="1">Allosterically activated by GTP.</text>
</comment>
<comment type="pathway">
    <text evidence="1">Pyrimidine metabolism; UMP biosynthesis via salvage pathway; UMP from uracil: step 1/1.</text>
</comment>
<comment type="similarity">
    <text evidence="1">Belongs to the UPRTase family.</text>
</comment>
<reference key="1">
    <citation type="journal article" date="2007" name="PLoS Genet.">
        <title>The complete genome sequence of Yersinia pseudotuberculosis IP31758, the causative agent of Far East scarlet-like fever.</title>
        <authorList>
            <person name="Eppinger M."/>
            <person name="Rosovitz M.J."/>
            <person name="Fricke W.F."/>
            <person name="Rasko D.A."/>
            <person name="Kokorina G."/>
            <person name="Fayolle C."/>
            <person name="Lindler L.E."/>
            <person name="Carniel E."/>
            <person name="Ravel J."/>
        </authorList>
    </citation>
    <scope>NUCLEOTIDE SEQUENCE [LARGE SCALE GENOMIC DNA]</scope>
    <source>
        <strain>IP 31758</strain>
    </source>
</reference>
<sequence>MKIVEVKHPLVKHKLGLMRENDISTKRFRELASEVGSLLTYVATADLETETVTIEGWNGPVEIEQIKGKKITVVPILRAGLGMMEGVLENVPSARISVVGVYRDEETLKPVPYFQKLVSNINERMALVVDPMLATGGSMIATIDLLKKAGCQSIKVLVLVAAPEGIKALEEAHPDVELYTASIDQGLNEHGYIIPGLGDAGDKIFGTK</sequence>
<name>UPP_YERP3</name>